<feature type="chain" id="PRO_1000010536" description="Acetylglutamate kinase">
    <location>
        <begin position="1"/>
        <end position="298"/>
    </location>
</feature>
<feature type="binding site" evidence="1">
    <location>
        <begin position="69"/>
        <end position="70"/>
    </location>
    <ligand>
        <name>substrate</name>
    </ligand>
</feature>
<feature type="binding site" evidence="1">
    <location>
        <position position="91"/>
    </location>
    <ligand>
        <name>substrate</name>
    </ligand>
</feature>
<feature type="binding site" evidence="1">
    <location>
        <position position="196"/>
    </location>
    <ligand>
        <name>substrate</name>
    </ligand>
</feature>
<feature type="site" description="Transition state stabilizer" evidence="1">
    <location>
        <position position="34"/>
    </location>
</feature>
<feature type="site" description="Transition state stabilizer" evidence="1">
    <location>
        <position position="256"/>
    </location>
</feature>
<proteinExistence type="inferred from homology"/>
<keyword id="KW-0028">Amino-acid biosynthesis</keyword>
<keyword id="KW-0055">Arginine biosynthesis</keyword>
<keyword id="KW-0067">ATP-binding</keyword>
<keyword id="KW-0963">Cytoplasm</keyword>
<keyword id="KW-0418">Kinase</keyword>
<keyword id="KW-0547">Nucleotide-binding</keyword>
<keyword id="KW-0808">Transferase</keyword>
<dbReference type="EC" id="2.7.2.8" evidence="1"/>
<dbReference type="EMBL" id="CP000463">
    <property type="protein sequence ID" value="ABJ04605.1"/>
    <property type="molecule type" value="Genomic_DNA"/>
</dbReference>
<dbReference type="SMR" id="Q07TX9"/>
<dbReference type="STRING" id="316055.RPE_0647"/>
<dbReference type="KEGG" id="rpe:RPE_0647"/>
<dbReference type="eggNOG" id="COG0548">
    <property type="taxonomic scope" value="Bacteria"/>
</dbReference>
<dbReference type="HOGENOM" id="CLU_053680_0_0_5"/>
<dbReference type="OrthoDB" id="9803155at2"/>
<dbReference type="UniPathway" id="UPA00068">
    <property type="reaction ID" value="UER00107"/>
</dbReference>
<dbReference type="GO" id="GO:0005737">
    <property type="term" value="C:cytoplasm"/>
    <property type="evidence" value="ECO:0007669"/>
    <property type="project" value="UniProtKB-SubCell"/>
</dbReference>
<dbReference type="GO" id="GO:0003991">
    <property type="term" value="F:acetylglutamate kinase activity"/>
    <property type="evidence" value="ECO:0007669"/>
    <property type="project" value="UniProtKB-UniRule"/>
</dbReference>
<dbReference type="GO" id="GO:0005524">
    <property type="term" value="F:ATP binding"/>
    <property type="evidence" value="ECO:0007669"/>
    <property type="project" value="UniProtKB-UniRule"/>
</dbReference>
<dbReference type="GO" id="GO:0042450">
    <property type="term" value="P:arginine biosynthetic process via ornithine"/>
    <property type="evidence" value="ECO:0007669"/>
    <property type="project" value="UniProtKB-UniRule"/>
</dbReference>
<dbReference type="GO" id="GO:0006526">
    <property type="term" value="P:L-arginine biosynthetic process"/>
    <property type="evidence" value="ECO:0007669"/>
    <property type="project" value="UniProtKB-UniPathway"/>
</dbReference>
<dbReference type="CDD" id="cd04250">
    <property type="entry name" value="AAK_NAGK-C"/>
    <property type="match status" value="1"/>
</dbReference>
<dbReference type="FunFam" id="3.40.1160.10:FF:000004">
    <property type="entry name" value="Acetylglutamate kinase"/>
    <property type="match status" value="1"/>
</dbReference>
<dbReference type="Gene3D" id="3.40.1160.10">
    <property type="entry name" value="Acetylglutamate kinase-like"/>
    <property type="match status" value="1"/>
</dbReference>
<dbReference type="HAMAP" id="MF_00082">
    <property type="entry name" value="ArgB"/>
    <property type="match status" value="1"/>
</dbReference>
<dbReference type="InterPro" id="IPR036393">
    <property type="entry name" value="AceGlu_kinase-like_sf"/>
</dbReference>
<dbReference type="InterPro" id="IPR004662">
    <property type="entry name" value="AcgluKinase_fam"/>
</dbReference>
<dbReference type="InterPro" id="IPR037528">
    <property type="entry name" value="ArgB"/>
</dbReference>
<dbReference type="InterPro" id="IPR001048">
    <property type="entry name" value="Asp/Glu/Uridylate_kinase"/>
</dbReference>
<dbReference type="InterPro" id="IPR041727">
    <property type="entry name" value="NAGK-C"/>
</dbReference>
<dbReference type="NCBIfam" id="TIGR00761">
    <property type="entry name" value="argB"/>
    <property type="match status" value="1"/>
</dbReference>
<dbReference type="PANTHER" id="PTHR23342">
    <property type="entry name" value="N-ACETYLGLUTAMATE SYNTHASE"/>
    <property type="match status" value="1"/>
</dbReference>
<dbReference type="PANTHER" id="PTHR23342:SF0">
    <property type="entry name" value="N-ACETYLGLUTAMATE SYNTHASE, MITOCHONDRIAL"/>
    <property type="match status" value="1"/>
</dbReference>
<dbReference type="Pfam" id="PF00696">
    <property type="entry name" value="AA_kinase"/>
    <property type="match status" value="1"/>
</dbReference>
<dbReference type="PIRSF" id="PIRSF000728">
    <property type="entry name" value="NAGK"/>
    <property type="match status" value="1"/>
</dbReference>
<dbReference type="SUPFAM" id="SSF53633">
    <property type="entry name" value="Carbamate kinase-like"/>
    <property type="match status" value="1"/>
</dbReference>
<evidence type="ECO:0000255" key="1">
    <source>
        <dbReference type="HAMAP-Rule" id="MF_00082"/>
    </source>
</evidence>
<reference key="1">
    <citation type="submission" date="2006-09" db="EMBL/GenBank/DDBJ databases">
        <title>Complete sequence of Rhodopseudomonas palustris BisA53.</title>
        <authorList>
            <consortium name="US DOE Joint Genome Institute"/>
            <person name="Copeland A."/>
            <person name="Lucas S."/>
            <person name="Lapidus A."/>
            <person name="Barry K."/>
            <person name="Detter J.C."/>
            <person name="Glavina del Rio T."/>
            <person name="Hammon N."/>
            <person name="Israni S."/>
            <person name="Dalin E."/>
            <person name="Tice H."/>
            <person name="Pitluck S."/>
            <person name="Chain P."/>
            <person name="Malfatti S."/>
            <person name="Shin M."/>
            <person name="Vergez L."/>
            <person name="Schmutz J."/>
            <person name="Larimer F."/>
            <person name="Land M."/>
            <person name="Hauser L."/>
            <person name="Pelletier D.A."/>
            <person name="Kyrpides N."/>
            <person name="Kim E."/>
            <person name="Harwood C.S."/>
            <person name="Oda Y."/>
            <person name="Richardson P."/>
        </authorList>
    </citation>
    <scope>NUCLEOTIDE SEQUENCE [LARGE SCALE GENOMIC DNA]</scope>
    <source>
        <strain>BisA53</strain>
    </source>
</reference>
<name>ARGB_RHOP5</name>
<gene>
    <name evidence="1" type="primary">argB</name>
    <name type="ordered locus">RPE_0647</name>
</gene>
<sequence length="298" mass="31503">MTDASHISPLEQARILSEALPHMQRYDEETIVIKYGGHAMGAEETAKAFARDIVLLEQTAINPVVVHGGGPQIATMLKRLGIKSEFAAGLRITDAATIEIVEMVLAGSINKQLVGYINEAGGKAVGLCGKDGNMVTACKATRTTVDPDSRIEEVIDLGFVGEPEKVDLTLLNQLIGHELIPVLAPLATSATGQTFNVNADTFAGAVAGALKAKRLLLLTDVPGVLDKSKQLIPELSVKDARRLIADGTISGGMIPKVETCIYALEQGVEGVVIIDGKTPHAVLLELFTNQGTGTLIHK</sequence>
<comment type="function">
    <text evidence="1">Catalyzes the ATP-dependent phosphorylation of N-acetyl-L-glutamate.</text>
</comment>
<comment type="catalytic activity">
    <reaction evidence="1">
        <text>N-acetyl-L-glutamate + ATP = N-acetyl-L-glutamyl 5-phosphate + ADP</text>
        <dbReference type="Rhea" id="RHEA:14629"/>
        <dbReference type="ChEBI" id="CHEBI:30616"/>
        <dbReference type="ChEBI" id="CHEBI:44337"/>
        <dbReference type="ChEBI" id="CHEBI:57936"/>
        <dbReference type="ChEBI" id="CHEBI:456216"/>
        <dbReference type="EC" id="2.7.2.8"/>
    </reaction>
</comment>
<comment type="pathway">
    <text evidence="1">Amino-acid biosynthesis; L-arginine biosynthesis; N(2)-acetyl-L-ornithine from L-glutamate: step 2/4.</text>
</comment>
<comment type="subcellular location">
    <subcellularLocation>
        <location evidence="1">Cytoplasm</location>
    </subcellularLocation>
</comment>
<comment type="similarity">
    <text evidence="1">Belongs to the acetylglutamate kinase family. ArgB subfamily.</text>
</comment>
<organism>
    <name type="scientific">Rhodopseudomonas palustris (strain BisA53)</name>
    <dbReference type="NCBI Taxonomy" id="316055"/>
    <lineage>
        <taxon>Bacteria</taxon>
        <taxon>Pseudomonadati</taxon>
        <taxon>Pseudomonadota</taxon>
        <taxon>Alphaproteobacteria</taxon>
        <taxon>Hyphomicrobiales</taxon>
        <taxon>Nitrobacteraceae</taxon>
        <taxon>Rhodopseudomonas</taxon>
    </lineage>
</organism>
<accession>Q07TX9</accession>
<protein>
    <recommendedName>
        <fullName evidence="1">Acetylglutamate kinase</fullName>
        <ecNumber evidence="1">2.7.2.8</ecNumber>
    </recommendedName>
    <alternativeName>
        <fullName evidence="1">N-acetyl-L-glutamate 5-phosphotransferase</fullName>
    </alternativeName>
    <alternativeName>
        <fullName evidence="1">NAG kinase</fullName>
        <shortName evidence="1">NAGK</shortName>
    </alternativeName>
</protein>